<protein>
    <recommendedName>
        <fullName evidence="1">ATP-dependent Clp protease ATP-binding subunit ClpX</fullName>
    </recommendedName>
</protein>
<dbReference type="EMBL" id="AE000516">
    <property type="protein sequence ID" value="AAK46832.1"/>
    <property type="molecule type" value="Genomic_DNA"/>
</dbReference>
<dbReference type="PIR" id="H70864">
    <property type="entry name" value="H70864"/>
</dbReference>
<dbReference type="RefSeq" id="WP_003917637.1">
    <property type="nucleotide sequence ID" value="NZ_KK341227.1"/>
</dbReference>
<dbReference type="SMR" id="P9WPB8"/>
<dbReference type="KEGG" id="mtc:MT2532"/>
<dbReference type="PATRIC" id="fig|83331.31.peg.2733"/>
<dbReference type="HOGENOM" id="CLU_014218_8_2_11"/>
<dbReference type="Proteomes" id="UP000001020">
    <property type="component" value="Chromosome"/>
</dbReference>
<dbReference type="GO" id="GO:0009376">
    <property type="term" value="C:HslUV protease complex"/>
    <property type="evidence" value="ECO:0007669"/>
    <property type="project" value="TreeGrafter"/>
</dbReference>
<dbReference type="GO" id="GO:0005524">
    <property type="term" value="F:ATP binding"/>
    <property type="evidence" value="ECO:0007669"/>
    <property type="project" value="UniProtKB-UniRule"/>
</dbReference>
<dbReference type="GO" id="GO:0016887">
    <property type="term" value="F:ATP hydrolysis activity"/>
    <property type="evidence" value="ECO:0007669"/>
    <property type="project" value="InterPro"/>
</dbReference>
<dbReference type="GO" id="GO:0140662">
    <property type="term" value="F:ATP-dependent protein folding chaperone"/>
    <property type="evidence" value="ECO:0007669"/>
    <property type="project" value="InterPro"/>
</dbReference>
<dbReference type="GO" id="GO:0046983">
    <property type="term" value="F:protein dimerization activity"/>
    <property type="evidence" value="ECO:0007669"/>
    <property type="project" value="InterPro"/>
</dbReference>
<dbReference type="GO" id="GO:0051082">
    <property type="term" value="F:unfolded protein binding"/>
    <property type="evidence" value="ECO:0007669"/>
    <property type="project" value="UniProtKB-UniRule"/>
</dbReference>
<dbReference type="GO" id="GO:0008270">
    <property type="term" value="F:zinc ion binding"/>
    <property type="evidence" value="ECO:0007669"/>
    <property type="project" value="InterPro"/>
</dbReference>
<dbReference type="GO" id="GO:0051301">
    <property type="term" value="P:cell division"/>
    <property type="evidence" value="ECO:0007669"/>
    <property type="project" value="TreeGrafter"/>
</dbReference>
<dbReference type="GO" id="GO:0051603">
    <property type="term" value="P:proteolysis involved in protein catabolic process"/>
    <property type="evidence" value="ECO:0007669"/>
    <property type="project" value="TreeGrafter"/>
</dbReference>
<dbReference type="CDD" id="cd19497">
    <property type="entry name" value="RecA-like_ClpX"/>
    <property type="match status" value="1"/>
</dbReference>
<dbReference type="FunFam" id="1.10.8.60:FF:000002">
    <property type="entry name" value="ATP-dependent Clp protease ATP-binding subunit ClpX"/>
    <property type="match status" value="1"/>
</dbReference>
<dbReference type="FunFam" id="3.40.50.300:FF:000005">
    <property type="entry name" value="ATP-dependent Clp protease ATP-binding subunit ClpX"/>
    <property type="match status" value="1"/>
</dbReference>
<dbReference type="Gene3D" id="1.10.8.60">
    <property type="match status" value="1"/>
</dbReference>
<dbReference type="Gene3D" id="6.20.220.10">
    <property type="entry name" value="ClpX chaperone, C4-type zinc finger domain"/>
    <property type="match status" value="1"/>
</dbReference>
<dbReference type="Gene3D" id="3.40.50.300">
    <property type="entry name" value="P-loop containing nucleotide triphosphate hydrolases"/>
    <property type="match status" value="1"/>
</dbReference>
<dbReference type="HAMAP" id="MF_00175">
    <property type="entry name" value="ClpX"/>
    <property type="match status" value="1"/>
</dbReference>
<dbReference type="InterPro" id="IPR003593">
    <property type="entry name" value="AAA+_ATPase"/>
</dbReference>
<dbReference type="InterPro" id="IPR050052">
    <property type="entry name" value="ATP-dep_Clp_protease_ClpX"/>
</dbReference>
<dbReference type="InterPro" id="IPR003959">
    <property type="entry name" value="ATPase_AAA_core"/>
</dbReference>
<dbReference type="InterPro" id="IPR019489">
    <property type="entry name" value="Clp_ATPase_C"/>
</dbReference>
<dbReference type="InterPro" id="IPR004487">
    <property type="entry name" value="Clp_protease_ATP-bd_su_ClpX"/>
</dbReference>
<dbReference type="InterPro" id="IPR046425">
    <property type="entry name" value="ClpX_bact"/>
</dbReference>
<dbReference type="InterPro" id="IPR027417">
    <property type="entry name" value="P-loop_NTPase"/>
</dbReference>
<dbReference type="InterPro" id="IPR010603">
    <property type="entry name" value="Znf_CppX_C4"/>
</dbReference>
<dbReference type="InterPro" id="IPR038366">
    <property type="entry name" value="Znf_CppX_C4_sf"/>
</dbReference>
<dbReference type="NCBIfam" id="TIGR00382">
    <property type="entry name" value="clpX"/>
    <property type="match status" value="1"/>
</dbReference>
<dbReference type="NCBIfam" id="NF003745">
    <property type="entry name" value="PRK05342.1"/>
    <property type="match status" value="1"/>
</dbReference>
<dbReference type="PANTHER" id="PTHR48102:SF7">
    <property type="entry name" value="ATP-DEPENDENT CLP PROTEASE ATP-BINDING SUBUNIT CLPX-LIKE, MITOCHONDRIAL"/>
    <property type="match status" value="1"/>
</dbReference>
<dbReference type="PANTHER" id="PTHR48102">
    <property type="entry name" value="ATP-DEPENDENT CLP PROTEASE ATP-BINDING SUBUNIT CLPX-LIKE, MITOCHONDRIAL-RELATED"/>
    <property type="match status" value="1"/>
</dbReference>
<dbReference type="Pfam" id="PF07724">
    <property type="entry name" value="AAA_2"/>
    <property type="match status" value="1"/>
</dbReference>
<dbReference type="Pfam" id="PF10431">
    <property type="entry name" value="ClpB_D2-small"/>
    <property type="match status" value="1"/>
</dbReference>
<dbReference type="Pfam" id="PF06689">
    <property type="entry name" value="zf-C4_ClpX"/>
    <property type="match status" value="1"/>
</dbReference>
<dbReference type="SMART" id="SM00382">
    <property type="entry name" value="AAA"/>
    <property type="match status" value="1"/>
</dbReference>
<dbReference type="SMART" id="SM01086">
    <property type="entry name" value="ClpB_D2-small"/>
    <property type="match status" value="1"/>
</dbReference>
<dbReference type="SMART" id="SM00994">
    <property type="entry name" value="zf-C4_ClpX"/>
    <property type="match status" value="1"/>
</dbReference>
<dbReference type="SUPFAM" id="SSF57716">
    <property type="entry name" value="Glucocorticoid receptor-like (DNA-binding domain)"/>
    <property type="match status" value="1"/>
</dbReference>
<dbReference type="SUPFAM" id="SSF52540">
    <property type="entry name" value="P-loop containing nucleoside triphosphate hydrolases"/>
    <property type="match status" value="1"/>
</dbReference>
<dbReference type="PROSITE" id="PS51902">
    <property type="entry name" value="CLPX_ZB"/>
    <property type="match status" value="1"/>
</dbReference>
<gene>
    <name evidence="1" type="primary">clpX</name>
    <name type="ordered locus">MT2532</name>
</gene>
<organism>
    <name type="scientific">Mycobacterium tuberculosis (strain CDC 1551 / Oshkosh)</name>
    <dbReference type="NCBI Taxonomy" id="83331"/>
    <lineage>
        <taxon>Bacteria</taxon>
        <taxon>Bacillati</taxon>
        <taxon>Actinomycetota</taxon>
        <taxon>Actinomycetes</taxon>
        <taxon>Mycobacteriales</taxon>
        <taxon>Mycobacteriaceae</taxon>
        <taxon>Mycobacterium</taxon>
        <taxon>Mycobacterium tuberculosis complex</taxon>
    </lineage>
</organism>
<accession>P9WPB8</accession>
<accession>L0T9P2</accession>
<accession>O53184</accession>
<accession>P0A528</accession>
<reference key="1">
    <citation type="journal article" date="2002" name="J. Bacteriol.">
        <title>Whole-genome comparison of Mycobacterium tuberculosis clinical and laboratory strains.</title>
        <authorList>
            <person name="Fleischmann R.D."/>
            <person name="Alland D."/>
            <person name="Eisen J.A."/>
            <person name="Carpenter L."/>
            <person name="White O."/>
            <person name="Peterson J.D."/>
            <person name="DeBoy R.T."/>
            <person name="Dodson R.J."/>
            <person name="Gwinn M.L."/>
            <person name="Haft D.H."/>
            <person name="Hickey E.K."/>
            <person name="Kolonay J.F."/>
            <person name="Nelson W.C."/>
            <person name="Umayam L.A."/>
            <person name="Ermolaeva M.D."/>
            <person name="Salzberg S.L."/>
            <person name="Delcher A."/>
            <person name="Utterback T.R."/>
            <person name="Weidman J.F."/>
            <person name="Khouri H.M."/>
            <person name="Gill J."/>
            <person name="Mikula A."/>
            <person name="Bishai W."/>
            <person name="Jacobs W.R. Jr."/>
            <person name="Venter J.C."/>
            <person name="Fraser C.M."/>
        </authorList>
    </citation>
    <scope>NUCLEOTIDE SEQUENCE [LARGE SCALE GENOMIC DNA]</scope>
    <source>
        <strain>CDC 1551 / Oshkosh</strain>
    </source>
</reference>
<evidence type="ECO:0000255" key="1">
    <source>
        <dbReference type="HAMAP-Rule" id="MF_00175"/>
    </source>
</evidence>
<evidence type="ECO:0000255" key="2">
    <source>
        <dbReference type="PROSITE-ProRule" id="PRU01250"/>
    </source>
</evidence>
<comment type="function">
    <text evidence="1">ATP-dependent specificity component of the Clp protease. It directs the protease to specific substrates. Can perform chaperone functions in the absence of ClpP.</text>
</comment>
<comment type="subunit">
    <text evidence="1">Component of the ClpX-ClpP complex. Forms a hexameric ring that, in the presence of ATP, binds to fourteen ClpP subunits assembled into a disk-like structure with a central cavity, resembling the structure of eukaryotic proteasomes.</text>
</comment>
<comment type="similarity">
    <text evidence="1">Belongs to the ClpX chaperone family.</text>
</comment>
<proteinExistence type="inferred from homology"/>
<feature type="chain" id="PRO_0000426979" description="ATP-dependent Clp protease ATP-binding subunit ClpX">
    <location>
        <begin position="1"/>
        <end position="426"/>
    </location>
</feature>
<feature type="domain" description="ClpX-type ZB" evidence="2">
    <location>
        <begin position="1"/>
        <end position="54"/>
    </location>
</feature>
<feature type="binding site" evidence="2">
    <location>
        <position position="13"/>
    </location>
    <ligand>
        <name>Zn(2+)</name>
        <dbReference type="ChEBI" id="CHEBI:29105"/>
    </ligand>
</feature>
<feature type="binding site" evidence="2">
    <location>
        <position position="16"/>
    </location>
    <ligand>
        <name>Zn(2+)</name>
        <dbReference type="ChEBI" id="CHEBI:29105"/>
    </ligand>
</feature>
<feature type="binding site" evidence="2">
    <location>
        <position position="35"/>
    </location>
    <ligand>
        <name>Zn(2+)</name>
        <dbReference type="ChEBI" id="CHEBI:29105"/>
    </ligand>
</feature>
<feature type="binding site" evidence="2">
    <location>
        <position position="38"/>
    </location>
    <ligand>
        <name>Zn(2+)</name>
        <dbReference type="ChEBI" id="CHEBI:29105"/>
    </ligand>
</feature>
<feature type="binding site" evidence="1">
    <location>
        <begin position="122"/>
        <end position="129"/>
    </location>
    <ligand>
        <name>ATP</name>
        <dbReference type="ChEBI" id="CHEBI:30616"/>
    </ligand>
</feature>
<keyword id="KW-0067">ATP-binding</keyword>
<keyword id="KW-0143">Chaperone</keyword>
<keyword id="KW-0479">Metal-binding</keyword>
<keyword id="KW-0547">Nucleotide-binding</keyword>
<keyword id="KW-1185">Reference proteome</keyword>
<keyword id="KW-0862">Zinc</keyword>
<sequence length="426" mass="46756">MARIGDGGDLLKCSFCGKSQKQVKKLIAGPGVYICDECIDLCNEIIEEELADADDVKLDELPKPAEIREFLEGYVIGQDTAKRTLAVAVYNHYKRIQAGEKGRDSRCEPVELTKSNILMLGPTGCGKTYLAQTLATMLNVPFAIADATALTEAGYVGEDVENILLKLIQAADYDVKRAETGIIYIDEVDKIARKSENPSITRDVSGEGVQQALLKILEGTQASVPPQGGRKHPHQEFIQIDTTNVLFIVAGAFAGLEKIIYERVGKRGLGFGAEVRSKAEIDTTDHFADVMPEDLIKFGLIPEFIGRLPVVASVTNLDKESLVKILSEPKNALVKQYIRLFEMDGVELEFTDDALEAIADQAIHRGTGARGLRAIMEEVLLPVMYDIPSRDDVAKVVVTKETVQDNVLPTIVPRKPSRSERRDKSA</sequence>
<name>CLPX_MYCTO</name>